<sequence>MARHPRWTLSQVTELFEKPLLELLFEAQQIHRQHFDPQQVQVSTLLSIKTGACPEDCKYCPQSSRYKTGLEAERLMEVEQVLDSARKAKNAGSTRFCMGAAWKNPHERDMPYLEQIVQGVKAMGLETCMTLGMLNESQAQRLANAGLDYYNHNLDTSPEFYGNIITTRTYQERLDTLEKVREAGIKVCSGGIVGLGETVTDRAGLLLQLANLPTPPESVPINMLVKVKGTPLADNDDVDAFDFIRTIAVARIMMPTSYVRLSAGREQMNEQTQAMCFMAGANSIFYGCKLLTTPNPAEDKDLQLFRKLGLNPQQTRVLAGDNEQQQRLEQTLMTPDTDDYYNAAAL</sequence>
<evidence type="ECO:0000255" key="1">
    <source>
        <dbReference type="HAMAP-Rule" id="MF_01694"/>
    </source>
</evidence>
<evidence type="ECO:0000255" key="2">
    <source>
        <dbReference type="PROSITE-ProRule" id="PRU01266"/>
    </source>
</evidence>
<protein>
    <recommendedName>
        <fullName evidence="1">Biotin synthase</fullName>
        <ecNumber evidence="1">2.8.1.6</ecNumber>
    </recommendedName>
</protein>
<proteinExistence type="inferred from homology"/>
<feature type="chain" id="PRO_0000381601" description="Biotin synthase">
    <location>
        <begin position="1"/>
        <end position="346"/>
    </location>
</feature>
<feature type="domain" description="Radical SAM core" evidence="2">
    <location>
        <begin position="38"/>
        <end position="256"/>
    </location>
</feature>
<feature type="binding site" evidence="1">
    <location>
        <position position="53"/>
    </location>
    <ligand>
        <name>[4Fe-4S] cluster</name>
        <dbReference type="ChEBI" id="CHEBI:49883"/>
        <note>4Fe-4S-S-AdoMet</note>
    </ligand>
</feature>
<feature type="binding site" evidence="1">
    <location>
        <position position="57"/>
    </location>
    <ligand>
        <name>[4Fe-4S] cluster</name>
        <dbReference type="ChEBI" id="CHEBI:49883"/>
        <note>4Fe-4S-S-AdoMet</note>
    </ligand>
</feature>
<feature type="binding site" evidence="1">
    <location>
        <position position="60"/>
    </location>
    <ligand>
        <name>[4Fe-4S] cluster</name>
        <dbReference type="ChEBI" id="CHEBI:49883"/>
        <note>4Fe-4S-S-AdoMet</note>
    </ligand>
</feature>
<feature type="binding site" evidence="1">
    <location>
        <position position="97"/>
    </location>
    <ligand>
        <name>[2Fe-2S] cluster</name>
        <dbReference type="ChEBI" id="CHEBI:190135"/>
    </ligand>
</feature>
<feature type="binding site" evidence="1">
    <location>
        <position position="128"/>
    </location>
    <ligand>
        <name>[2Fe-2S] cluster</name>
        <dbReference type="ChEBI" id="CHEBI:190135"/>
    </ligand>
</feature>
<feature type="binding site" evidence="1">
    <location>
        <position position="188"/>
    </location>
    <ligand>
        <name>[2Fe-2S] cluster</name>
        <dbReference type="ChEBI" id="CHEBI:190135"/>
    </ligand>
</feature>
<feature type="binding site" evidence="1">
    <location>
        <position position="260"/>
    </location>
    <ligand>
        <name>[2Fe-2S] cluster</name>
        <dbReference type="ChEBI" id="CHEBI:190135"/>
    </ligand>
</feature>
<dbReference type="EC" id="2.8.1.6" evidence="1"/>
<dbReference type="EMBL" id="CP001120">
    <property type="protein sequence ID" value="ACF70054.1"/>
    <property type="molecule type" value="Genomic_DNA"/>
</dbReference>
<dbReference type="RefSeq" id="WP_000090727.1">
    <property type="nucleotide sequence ID" value="NC_011083.1"/>
</dbReference>
<dbReference type="SMR" id="B4TC48"/>
<dbReference type="KEGG" id="seh:SeHA_C0921"/>
<dbReference type="HOGENOM" id="CLU_033172_1_2_6"/>
<dbReference type="UniPathway" id="UPA00078">
    <property type="reaction ID" value="UER00162"/>
</dbReference>
<dbReference type="Proteomes" id="UP000001866">
    <property type="component" value="Chromosome"/>
</dbReference>
<dbReference type="GO" id="GO:0051537">
    <property type="term" value="F:2 iron, 2 sulfur cluster binding"/>
    <property type="evidence" value="ECO:0007669"/>
    <property type="project" value="UniProtKB-KW"/>
</dbReference>
<dbReference type="GO" id="GO:0051539">
    <property type="term" value="F:4 iron, 4 sulfur cluster binding"/>
    <property type="evidence" value="ECO:0007669"/>
    <property type="project" value="UniProtKB-KW"/>
</dbReference>
<dbReference type="GO" id="GO:0004076">
    <property type="term" value="F:biotin synthase activity"/>
    <property type="evidence" value="ECO:0007669"/>
    <property type="project" value="UniProtKB-UniRule"/>
</dbReference>
<dbReference type="GO" id="GO:0005506">
    <property type="term" value="F:iron ion binding"/>
    <property type="evidence" value="ECO:0007669"/>
    <property type="project" value="UniProtKB-UniRule"/>
</dbReference>
<dbReference type="GO" id="GO:0009102">
    <property type="term" value="P:biotin biosynthetic process"/>
    <property type="evidence" value="ECO:0007669"/>
    <property type="project" value="UniProtKB-UniRule"/>
</dbReference>
<dbReference type="CDD" id="cd01335">
    <property type="entry name" value="Radical_SAM"/>
    <property type="match status" value="1"/>
</dbReference>
<dbReference type="FunFam" id="3.20.20.70:FF:000011">
    <property type="entry name" value="Biotin synthase"/>
    <property type="match status" value="1"/>
</dbReference>
<dbReference type="Gene3D" id="3.20.20.70">
    <property type="entry name" value="Aldolase class I"/>
    <property type="match status" value="1"/>
</dbReference>
<dbReference type="HAMAP" id="MF_01694">
    <property type="entry name" value="BioB"/>
    <property type="match status" value="1"/>
</dbReference>
<dbReference type="InterPro" id="IPR013785">
    <property type="entry name" value="Aldolase_TIM"/>
</dbReference>
<dbReference type="InterPro" id="IPR010722">
    <property type="entry name" value="BATS_dom"/>
</dbReference>
<dbReference type="InterPro" id="IPR002684">
    <property type="entry name" value="Biotin_synth/BioAB"/>
</dbReference>
<dbReference type="InterPro" id="IPR024177">
    <property type="entry name" value="Biotin_synthase"/>
</dbReference>
<dbReference type="InterPro" id="IPR006638">
    <property type="entry name" value="Elp3/MiaA/NifB-like_rSAM"/>
</dbReference>
<dbReference type="InterPro" id="IPR007197">
    <property type="entry name" value="rSAM"/>
</dbReference>
<dbReference type="NCBIfam" id="TIGR00433">
    <property type="entry name" value="bioB"/>
    <property type="match status" value="1"/>
</dbReference>
<dbReference type="PANTHER" id="PTHR22976">
    <property type="entry name" value="BIOTIN SYNTHASE"/>
    <property type="match status" value="1"/>
</dbReference>
<dbReference type="PANTHER" id="PTHR22976:SF2">
    <property type="entry name" value="BIOTIN SYNTHASE, MITOCHONDRIAL"/>
    <property type="match status" value="1"/>
</dbReference>
<dbReference type="Pfam" id="PF06968">
    <property type="entry name" value="BATS"/>
    <property type="match status" value="1"/>
</dbReference>
<dbReference type="Pfam" id="PF04055">
    <property type="entry name" value="Radical_SAM"/>
    <property type="match status" value="1"/>
</dbReference>
<dbReference type="PIRSF" id="PIRSF001619">
    <property type="entry name" value="Biotin_synth"/>
    <property type="match status" value="1"/>
</dbReference>
<dbReference type="SFLD" id="SFLDF00272">
    <property type="entry name" value="biotin_synthase"/>
    <property type="match status" value="1"/>
</dbReference>
<dbReference type="SFLD" id="SFLDS00029">
    <property type="entry name" value="Radical_SAM"/>
    <property type="match status" value="1"/>
</dbReference>
<dbReference type="SMART" id="SM00876">
    <property type="entry name" value="BATS"/>
    <property type="match status" value="1"/>
</dbReference>
<dbReference type="SMART" id="SM00729">
    <property type="entry name" value="Elp3"/>
    <property type="match status" value="1"/>
</dbReference>
<dbReference type="SUPFAM" id="SSF102114">
    <property type="entry name" value="Radical SAM enzymes"/>
    <property type="match status" value="1"/>
</dbReference>
<dbReference type="PROSITE" id="PS51918">
    <property type="entry name" value="RADICAL_SAM"/>
    <property type="match status" value="1"/>
</dbReference>
<comment type="function">
    <text evidence="1">Catalyzes the conversion of dethiobiotin (DTB) to biotin by the insertion of a sulfur atom into dethiobiotin via a radical-based mechanism.</text>
</comment>
<comment type="catalytic activity">
    <reaction evidence="1">
        <text>(4R,5S)-dethiobiotin + (sulfur carrier)-SH + 2 reduced [2Fe-2S]-[ferredoxin] + 2 S-adenosyl-L-methionine = (sulfur carrier)-H + biotin + 2 5'-deoxyadenosine + 2 L-methionine + 2 oxidized [2Fe-2S]-[ferredoxin]</text>
        <dbReference type="Rhea" id="RHEA:22060"/>
        <dbReference type="Rhea" id="RHEA-COMP:10000"/>
        <dbReference type="Rhea" id="RHEA-COMP:10001"/>
        <dbReference type="Rhea" id="RHEA-COMP:14737"/>
        <dbReference type="Rhea" id="RHEA-COMP:14739"/>
        <dbReference type="ChEBI" id="CHEBI:17319"/>
        <dbReference type="ChEBI" id="CHEBI:29917"/>
        <dbReference type="ChEBI" id="CHEBI:33737"/>
        <dbReference type="ChEBI" id="CHEBI:33738"/>
        <dbReference type="ChEBI" id="CHEBI:57586"/>
        <dbReference type="ChEBI" id="CHEBI:57844"/>
        <dbReference type="ChEBI" id="CHEBI:59789"/>
        <dbReference type="ChEBI" id="CHEBI:64428"/>
        <dbReference type="ChEBI" id="CHEBI:149473"/>
        <dbReference type="EC" id="2.8.1.6"/>
    </reaction>
</comment>
<comment type="cofactor">
    <cofactor evidence="1">
        <name>[4Fe-4S] cluster</name>
        <dbReference type="ChEBI" id="CHEBI:49883"/>
    </cofactor>
    <text evidence="1">Binds 1 [4Fe-4S] cluster. The cluster is coordinated with 3 cysteines and an exchangeable S-adenosyl-L-methionine.</text>
</comment>
<comment type="cofactor">
    <cofactor evidence="1">
        <name>[2Fe-2S] cluster</name>
        <dbReference type="ChEBI" id="CHEBI:190135"/>
    </cofactor>
    <text evidence="1">Binds 1 [2Fe-2S] cluster. The cluster is coordinated with 3 cysteines and 1 arginine.</text>
</comment>
<comment type="pathway">
    <text evidence="1">Cofactor biosynthesis; biotin biosynthesis; biotin from 7,8-diaminononanoate: step 2/2.</text>
</comment>
<comment type="subunit">
    <text evidence="1">Homodimer.</text>
</comment>
<comment type="similarity">
    <text evidence="1">Belongs to the radical SAM superfamily. Biotin synthase family.</text>
</comment>
<reference key="1">
    <citation type="journal article" date="2011" name="J. Bacteriol.">
        <title>Comparative genomics of 28 Salmonella enterica isolates: evidence for CRISPR-mediated adaptive sublineage evolution.</title>
        <authorList>
            <person name="Fricke W.F."/>
            <person name="Mammel M.K."/>
            <person name="McDermott P.F."/>
            <person name="Tartera C."/>
            <person name="White D.G."/>
            <person name="Leclerc J.E."/>
            <person name="Ravel J."/>
            <person name="Cebula T.A."/>
        </authorList>
    </citation>
    <scope>NUCLEOTIDE SEQUENCE [LARGE SCALE GENOMIC DNA]</scope>
    <source>
        <strain>SL476</strain>
    </source>
</reference>
<name>BIOB_SALHS</name>
<accession>B4TC48</accession>
<keyword id="KW-0001">2Fe-2S</keyword>
<keyword id="KW-0004">4Fe-4S</keyword>
<keyword id="KW-0093">Biotin biosynthesis</keyword>
<keyword id="KW-0408">Iron</keyword>
<keyword id="KW-0411">Iron-sulfur</keyword>
<keyword id="KW-0479">Metal-binding</keyword>
<keyword id="KW-0949">S-adenosyl-L-methionine</keyword>
<keyword id="KW-0808">Transferase</keyword>
<organism>
    <name type="scientific">Salmonella heidelberg (strain SL476)</name>
    <dbReference type="NCBI Taxonomy" id="454169"/>
    <lineage>
        <taxon>Bacteria</taxon>
        <taxon>Pseudomonadati</taxon>
        <taxon>Pseudomonadota</taxon>
        <taxon>Gammaproteobacteria</taxon>
        <taxon>Enterobacterales</taxon>
        <taxon>Enterobacteriaceae</taxon>
        <taxon>Salmonella</taxon>
    </lineage>
</organism>
<gene>
    <name evidence="1" type="primary">bioB</name>
    <name type="ordered locus">SeHA_C0921</name>
</gene>